<evidence type="ECO:0000255" key="1">
    <source>
        <dbReference type="HAMAP-Rule" id="MF_01306"/>
    </source>
</evidence>
<evidence type="ECO:0000305" key="2"/>
<keyword id="KW-0687">Ribonucleoprotein</keyword>
<keyword id="KW-0689">Ribosomal protein</keyword>
<keyword id="KW-0694">RNA-binding</keyword>
<keyword id="KW-0699">rRNA-binding</keyword>
<proteinExistence type="inferred from homology"/>
<dbReference type="EMBL" id="CP000036">
    <property type="protein sequence ID" value="ABB67778.1"/>
    <property type="molecule type" value="Genomic_DNA"/>
</dbReference>
<dbReference type="RefSeq" id="WP_000135224.1">
    <property type="nucleotide sequence ID" value="NC_007613.1"/>
</dbReference>
<dbReference type="SMR" id="Q31VY0"/>
<dbReference type="GeneID" id="93778691"/>
<dbReference type="KEGG" id="sbo:SBO_3290"/>
<dbReference type="HOGENOM" id="CLU_092403_0_2_6"/>
<dbReference type="Proteomes" id="UP000007067">
    <property type="component" value="Chromosome"/>
</dbReference>
<dbReference type="GO" id="GO:0015935">
    <property type="term" value="C:small ribosomal subunit"/>
    <property type="evidence" value="ECO:0007669"/>
    <property type="project" value="InterPro"/>
</dbReference>
<dbReference type="GO" id="GO:0019843">
    <property type="term" value="F:rRNA binding"/>
    <property type="evidence" value="ECO:0007669"/>
    <property type="project" value="UniProtKB-UniRule"/>
</dbReference>
<dbReference type="GO" id="GO:0003735">
    <property type="term" value="F:structural constituent of ribosome"/>
    <property type="evidence" value="ECO:0007669"/>
    <property type="project" value="InterPro"/>
</dbReference>
<dbReference type="GO" id="GO:0042274">
    <property type="term" value="P:ribosomal small subunit biogenesis"/>
    <property type="evidence" value="ECO:0007669"/>
    <property type="project" value="TreeGrafter"/>
</dbReference>
<dbReference type="GO" id="GO:0006412">
    <property type="term" value="P:translation"/>
    <property type="evidence" value="ECO:0007669"/>
    <property type="project" value="UniProtKB-UniRule"/>
</dbReference>
<dbReference type="CDD" id="cd00165">
    <property type="entry name" value="S4"/>
    <property type="match status" value="1"/>
</dbReference>
<dbReference type="FunFam" id="1.10.1050.10:FF:000001">
    <property type="entry name" value="30S ribosomal protein S4"/>
    <property type="match status" value="1"/>
</dbReference>
<dbReference type="FunFam" id="3.10.290.10:FF:000001">
    <property type="entry name" value="30S ribosomal protein S4"/>
    <property type="match status" value="1"/>
</dbReference>
<dbReference type="Gene3D" id="1.10.1050.10">
    <property type="entry name" value="Ribosomal Protein S4 Delta 41, Chain A, domain 1"/>
    <property type="match status" value="1"/>
</dbReference>
<dbReference type="Gene3D" id="3.10.290.10">
    <property type="entry name" value="RNA-binding S4 domain"/>
    <property type="match status" value="1"/>
</dbReference>
<dbReference type="HAMAP" id="MF_01306_B">
    <property type="entry name" value="Ribosomal_uS4_B"/>
    <property type="match status" value="1"/>
</dbReference>
<dbReference type="InterPro" id="IPR022801">
    <property type="entry name" value="Ribosomal_uS4"/>
</dbReference>
<dbReference type="InterPro" id="IPR005709">
    <property type="entry name" value="Ribosomal_uS4_bac-type"/>
</dbReference>
<dbReference type="InterPro" id="IPR018079">
    <property type="entry name" value="Ribosomal_uS4_CS"/>
</dbReference>
<dbReference type="InterPro" id="IPR001912">
    <property type="entry name" value="Ribosomal_uS4_N"/>
</dbReference>
<dbReference type="InterPro" id="IPR002942">
    <property type="entry name" value="S4_RNA-bd"/>
</dbReference>
<dbReference type="InterPro" id="IPR036986">
    <property type="entry name" value="S4_RNA-bd_sf"/>
</dbReference>
<dbReference type="NCBIfam" id="NF003717">
    <property type="entry name" value="PRK05327.1"/>
    <property type="match status" value="1"/>
</dbReference>
<dbReference type="NCBIfam" id="TIGR01017">
    <property type="entry name" value="rpsD_bact"/>
    <property type="match status" value="1"/>
</dbReference>
<dbReference type="PANTHER" id="PTHR11831">
    <property type="entry name" value="30S 40S RIBOSOMAL PROTEIN"/>
    <property type="match status" value="1"/>
</dbReference>
<dbReference type="PANTHER" id="PTHR11831:SF4">
    <property type="entry name" value="SMALL RIBOSOMAL SUBUNIT PROTEIN US4M"/>
    <property type="match status" value="1"/>
</dbReference>
<dbReference type="Pfam" id="PF00163">
    <property type="entry name" value="Ribosomal_S4"/>
    <property type="match status" value="1"/>
</dbReference>
<dbReference type="Pfam" id="PF01479">
    <property type="entry name" value="S4"/>
    <property type="match status" value="1"/>
</dbReference>
<dbReference type="SMART" id="SM01390">
    <property type="entry name" value="Ribosomal_S4"/>
    <property type="match status" value="1"/>
</dbReference>
<dbReference type="SMART" id="SM00363">
    <property type="entry name" value="S4"/>
    <property type="match status" value="1"/>
</dbReference>
<dbReference type="SUPFAM" id="SSF55174">
    <property type="entry name" value="Alpha-L RNA-binding motif"/>
    <property type="match status" value="1"/>
</dbReference>
<dbReference type="PROSITE" id="PS00632">
    <property type="entry name" value="RIBOSOMAL_S4"/>
    <property type="match status" value="1"/>
</dbReference>
<dbReference type="PROSITE" id="PS50889">
    <property type="entry name" value="S4"/>
    <property type="match status" value="1"/>
</dbReference>
<reference key="1">
    <citation type="journal article" date="2005" name="Nucleic Acids Res.">
        <title>Genome dynamics and diversity of Shigella species, the etiologic agents of bacillary dysentery.</title>
        <authorList>
            <person name="Yang F."/>
            <person name="Yang J."/>
            <person name="Zhang X."/>
            <person name="Chen L."/>
            <person name="Jiang Y."/>
            <person name="Yan Y."/>
            <person name="Tang X."/>
            <person name="Wang J."/>
            <person name="Xiong Z."/>
            <person name="Dong J."/>
            <person name="Xue Y."/>
            <person name="Zhu Y."/>
            <person name="Xu X."/>
            <person name="Sun L."/>
            <person name="Chen S."/>
            <person name="Nie H."/>
            <person name="Peng J."/>
            <person name="Xu J."/>
            <person name="Wang Y."/>
            <person name="Yuan Z."/>
            <person name="Wen Y."/>
            <person name="Yao Z."/>
            <person name="Shen Y."/>
            <person name="Qiang B."/>
            <person name="Hou Y."/>
            <person name="Yu J."/>
            <person name="Jin Q."/>
        </authorList>
    </citation>
    <scope>NUCLEOTIDE SEQUENCE [LARGE SCALE GENOMIC DNA]</scope>
    <source>
        <strain>Sb227</strain>
    </source>
</reference>
<comment type="function">
    <text evidence="1">One of the primary rRNA binding proteins, it binds directly to 16S rRNA where it nucleates assembly of the body of the 30S subunit.</text>
</comment>
<comment type="function">
    <text evidence="1">With S5 and S12 plays an important role in translational accuracy.</text>
</comment>
<comment type="subunit">
    <text evidence="1">Part of the 30S ribosomal subunit. Contacts protein S5. The interaction surface between S4 and S5 is involved in control of translational fidelity.</text>
</comment>
<comment type="similarity">
    <text evidence="1">Belongs to the universal ribosomal protein uS4 family.</text>
</comment>
<gene>
    <name evidence="1" type="primary">rpsD</name>
    <name type="ordered locus">SBO_3290</name>
</gene>
<accession>Q31VY0</accession>
<name>RS4_SHIBS</name>
<organism>
    <name type="scientific">Shigella boydii serotype 4 (strain Sb227)</name>
    <dbReference type="NCBI Taxonomy" id="300268"/>
    <lineage>
        <taxon>Bacteria</taxon>
        <taxon>Pseudomonadati</taxon>
        <taxon>Pseudomonadota</taxon>
        <taxon>Gammaproteobacteria</taxon>
        <taxon>Enterobacterales</taxon>
        <taxon>Enterobacteriaceae</taxon>
        <taxon>Shigella</taxon>
    </lineage>
</organism>
<sequence>MARYLGPKLKLSRREGTDLFLKSGVRAIDTKCKIEQAPGQHGARKPRLSDYGVQLREKQKVRRIYGVLERQFRNYYKEAARLKGNTGENLLALLEGRLDNVVYRMGFGATRAEARQLVSHKAIMVNGRVVNIASYQVSPNDVVSIREKAKKQSRVKAALELAEQREKPTWLEVDAGKMEGTFKRKPERSDLSADINEHLIVELYSK</sequence>
<protein>
    <recommendedName>
        <fullName evidence="1">Small ribosomal subunit protein uS4</fullName>
    </recommendedName>
    <alternativeName>
        <fullName evidence="2">30S ribosomal protein S4</fullName>
    </alternativeName>
</protein>
<feature type="chain" id="PRO_0000228924" description="Small ribosomal subunit protein uS4">
    <location>
        <begin position="1"/>
        <end position="206"/>
    </location>
</feature>
<feature type="domain" description="S4 RNA-binding" evidence="1">
    <location>
        <begin position="96"/>
        <end position="156"/>
    </location>
</feature>